<dbReference type="EMBL" id="CP000738">
    <property type="protein sequence ID" value="ABR58938.1"/>
    <property type="molecule type" value="Genomic_DNA"/>
</dbReference>
<dbReference type="RefSeq" id="YP_001325773.1">
    <property type="nucleotide sequence ID" value="NC_009636.1"/>
</dbReference>
<dbReference type="SMR" id="A6U5K8"/>
<dbReference type="STRING" id="366394.Smed_0078"/>
<dbReference type="KEGG" id="smd:Smed_0078"/>
<dbReference type="PATRIC" id="fig|366394.8.peg.3134"/>
<dbReference type="eggNOG" id="COG0218">
    <property type="taxonomic scope" value="Bacteria"/>
</dbReference>
<dbReference type="HOGENOM" id="CLU_033732_2_0_5"/>
<dbReference type="OrthoDB" id="9804921at2"/>
<dbReference type="Proteomes" id="UP000001108">
    <property type="component" value="Chromosome"/>
</dbReference>
<dbReference type="GO" id="GO:0005829">
    <property type="term" value="C:cytosol"/>
    <property type="evidence" value="ECO:0007669"/>
    <property type="project" value="TreeGrafter"/>
</dbReference>
<dbReference type="GO" id="GO:0005525">
    <property type="term" value="F:GTP binding"/>
    <property type="evidence" value="ECO:0007669"/>
    <property type="project" value="UniProtKB-UniRule"/>
</dbReference>
<dbReference type="GO" id="GO:0046872">
    <property type="term" value="F:metal ion binding"/>
    <property type="evidence" value="ECO:0007669"/>
    <property type="project" value="UniProtKB-KW"/>
</dbReference>
<dbReference type="GO" id="GO:0000917">
    <property type="term" value="P:division septum assembly"/>
    <property type="evidence" value="ECO:0007669"/>
    <property type="project" value="UniProtKB-KW"/>
</dbReference>
<dbReference type="CDD" id="cd01876">
    <property type="entry name" value="YihA_EngB"/>
    <property type="match status" value="1"/>
</dbReference>
<dbReference type="Gene3D" id="3.40.50.300">
    <property type="entry name" value="P-loop containing nucleotide triphosphate hydrolases"/>
    <property type="match status" value="1"/>
</dbReference>
<dbReference type="HAMAP" id="MF_00321">
    <property type="entry name" value="GTPase_EngB"/>
    <property type="match status" value="1"/>
</dbReference>
<dbReference type="InterPro" id="IPR030393">
    <property type="entry name" value="G_ENGB_dom"/>
</dbReference>
<dbReference type="InterPro" id="IPR006073">
    <property type="entry name" value="GTP-bd"/>
</dbReference>
<dbReference type="InterPro" id="IPR019987">
    <property type="entry name" value="GTP-bd_ribosome_bio_YsxC"/>
</dbReference>
<dbReference type="InterPro" id="IPR027417">
    <property type="entry name" value="P-loop_NTPase"/>
</dbReference>
<dbReference type="NCBIfam" id="TIGR03598">
    <property type="entry name" value="GTPase_YsxC"/>
    <property type="match status" value="1"/>
</dbReference>
<dbReference type="PANTHER" id="PTHR11649:SF13">
    <property type="entry name" value="ENGB-TYPE G DOMAIN-CONTAINING PROTEIN"/>
    <property type="match status" value="1"/>
</dbReference>
<dbReference type="PANTHER" id="PTHR11649">
    <property type="entry name" value="MSS1/TRME-RELATED GTP-BINDING PROTEIN"/>
    <property type="match status" value="1"/>
</dbReference>
<dbReference type="Pfam" id="PF01926">
    <property type="entry name" value="MMR_HSR1"/>
    <property type="match status" value="1"/>
</dbReference>
<dbReference type="SUPFAM" id="SSF52540">
    <property type="entry name" value="P-loop containing nucleoside triphosphate hydrolases"/>
    <property type="match status" value="1"/>
</dbReference>
<dbReference type="PROSITE" id="PS51706">
    <property type="entry name" value="G_ENGB"/>
    <property type="match status" value="1"/>
</dbReference>
<protein>
    <recommendedName>
        <fullName evidence="1">Probable GTP-binding protein EngB</fullName>
    </recommendedName>
</protein>
<reference key="1">
    <citation type="submission" date="2007-06" db="EMBL/GenBank/DDBJ databases">
        <title>Complete sequence of Sinorhizobium medicae WSM419 chromosome.</title>
        <authorList>
            <consortium name="US DOE Joint Genome Institute"/>
            <person name="Copeland A."/>
            <person name="Lucas S."/>
            <person name="Lapidus A."/>
            <person name="Barry K."/>
            <person name="Glavina del Rio T."/>
            <person name="Dalin E."/>
            <person name="Tice H."/>
            <person name="Pitluck S."/>
            <person name="Chain P."/>
            <person name="Malfatti S."/>
            <person name="Shin M."/>
            <person name="Vergez L."/>
            <person name="Schmutz J."/>
            <person name="Larimer F."/>
            <person name="Land M."/>
            <person name="Hauser L."/>
            <person name="Kyrpides N."/>
            <person name="Mikhailova N."/>
            <person name="Reeve W.G."/>
            <person name="Richardson P."/>
        </authorList>
    </citation>
    <scope>NUCLEOTIDE SEQUENCE [LARGE SCALE GENOMIC DNA]</scope>
    <source>
        <strain>WSM419</strain>
    </source>
</reference>
<accession>A6U5K8</accession>
<evidence type="ECO:0000255" key="1">
    <source>
        <dbReference type="HAMAP-Rule" id="MF_00321"/>
    </source>
</evidence>
<comment type="function">
    <text evidence="1">Necessary for normal cell division and for the maintenance of normal septation.</text>
</comment>
<comment type="cofactor">
    <cofactor evidence="1">
        <name>Mg(2+)</name>
        <dbReference type="ChEBI" id="CHEBI:18420"/>
    </cofactor>
</comment>
<comment type="similarity">
    <text evidence="1">Belongs to the TRAFAC class TrmE-Era-EngA-EngB-Septin-like GTPase superfamily. EngB GTPase family.</text>
</comment>
<keyword id="KW-0131">Cell cycle</keyword>
<keyword id="KW-0132">Cell division</keyword>
<keyword id="KW-0342">GTP-binding</keyword>
<keyword id="KW-0460">Magnesium</keyword>
<keyword id="KW-0479">Metal-binding</keyword>
<keyword id="KW-0547">Nucleotide-binding</keyword>
<keyword id="KW-0717">Septation</keyword>
<sequence>MSATNNQNAASVFGRPWIFIRGVPSMKFLPPEGPTEIAFAGRSNVGKSSLINALVGHKGLARTSNTPGRTQELNYFVPDGYSGEADDLPPMALVDMPGYGYAQAPKEQVDAWTKLVFDYLRGRSTLKRVYVLIDARHGIKKNDEEVLALLDKAAVSYQIVLTKTDKIKAAGVPRLLAETLEKIRKRPAAFPEVLSTSSEKGEGIEELRAAIELAVAR</sequence>
<feature type="chain" id="PRO_1000005859" description="Probable GTP-binding protein EngB">
    <location>
        <begin position="1"/>
        <end position="217"/>
    </location>
</feature>
<feature type="domain" description="EngB-type G" evidence="1">
    <location>
        <begin position="33"/>
        <end position="217"/>
    </location>
</feature>
<feature type="binding site" evidence="1">
    <location>
        <begin position="41"/>
        <end position="48"/>
    </location>
    <ligand>
        <name>GTP</name>
        <dbReference type="ChEBI" id="CHEBI:37565"/>
    </ligand>
</feature>
<feature type="binding site" evidence="1">
    <location>
        <position position="48"/>
    </location>
    <ligand>
        <name>Mg(2+)</name>
        <dbReference type="ChEBI" id="CHEBI:18420"/>
    </ligand>
</feature>
<feature type="binding site" evidence="1">
    <location>
        <begin position="68"/>
        <end position="72"/>
    </location>
    <ligand>
        <name>GTP</name>
        <dbReference type="ChEBI" id="CHEBI:37565"/>
    </ligand>
</feature>
<feature type="binding site" evidence="1">
    <location>
        <position position="70"/>
    </location>
    <ligand>
        <name>Mg(2+)</name>
        <dbReference type="ChEBI" id="CHEBI:18420"/>
    </ligand>
</feature>
<feature type="binding site" evidence="1">
    <location>
        <begin position="95"/>
        <end position="98"/>
    </location>
    <ligand>
        <name>GTP</name>
        <dbReference type="ChEBI" id="CHEBI:37565"/>
    </ligand>
</feature>
<feature type="binding site" evidence="1">
    <location>
        <begin position="162"/>
        <end position="165"/>
    </location>
    <ligand>
        <name>GTP</name>
        <dbReference type="ChEBI" id="CHEBI:37565"/>
    </ligand>
</feature>
<feature type="binding site" evidence="1">
    <location>
        <begin position="196"/>
        <end position="198"/>
    </location>
    <ligand>
        <name>GTP</name>
        <dbReference type="ChEBI" id="CHEBI:37565"/>
    </ligand>
</feature>
<gene>
    <name evidence="1" type="primary">engB</name>
    <name type="ordered locus">Smed_0078</name>
</gene>
<organism>
    <name type="scientific">Sinorhizobium medicae (strain WSM419)</name>
    <name type="common">Ensifer medicae</name>
    <dbReference type="NCBI Taxonomy" id="366394"/>
    <lineage>
        <taxon>Bacteria</taxon>
        <taxon>Pseudomonadati</taxon>
        <taxon>Pseudomonadota</taxon>
        <taxon>Alphaproteobacteria</taxon>
        <taxon>Hyphomicrobiales</taxon>
        <taxon>Rhizobiaceae</taxon>
        <taxon>Sinorhizobium/Ensifer group</taxon>
        <taxon>Sinorhizobium</taxon>
    </lineage>
</organism>
<proteinExistence type="inferred from homology"/>
<name>ENGB_SINMW</name>